<dbReference type="EMBL" id="U46127">
    <property type="protein sequence ID" value="AAC59786.1"/>
    <property type="status" value="ALT_SEQ"/>
    <property type="molecule type" value="mRNA"/>
</dbReference>
<dbReference type="EMBL" id="U46128">
    <property type="protein sequence ID" value="AAC59787.1"/>
    <property type="status" value="ALT_SEQ"/>
    <property type="molecule type" value="mRNA"/>
</dbReference>
<dbReference type="PIR" id="T09284">
    <property type="entry name" value="T09284"/>
</dbReference>
<dbReference type="SMR" id="Q90701"/>
<dbReference type="FunCoup" id="Q90701">
    <property type="interactions" value="1546"/>
</dbReference>
<dbReference type="STRING" id="9031.ENSGALP00000046990"/>
<dbReference type="PaxDb" id="9031-ENSGALP00000001405"/>
<dbReference type="VEuPathDB" id="HostDB:geneid_395810"/>
<dbReference type="eggNOG" id="KOG3841">
    <property type="taxonomic scope" value="Eukaryota"/>
</dbReference>
<dbReference type="InParanoid" id="Q90701"/>
<dbReference type="OrthoDB" id="10006572at2759"/>
<dbReference type="PhylomeDB" id="Q90701"/>
<dbReference type="PRO" id="PR:Q90701"/>
<dbReference type="Proteomes" id="UP000000539">
    <property type="component" value="Unassembled WGS sequence"/>
</dbReference>
<dbReference type="GO" id="GO:0005634">
    <property type="term" value="C:nucleus"/>
    <property type="evidence" value="ECO:0007669"/>
    <property type="project" value="UniProtKB-SubCell"/>
</dbReference>
<dbReference type="GO" id="GO:0005667">
    <property type="term" value="C:transcription regulator complex"/>
    <property type="evidence" value="ECO:0000318"/>
    <property type="project" value="GO_Central"/>
</dbReference>
<dbReference type="GO" id="GO:0000981">
    <property type="term" value="F:DNA-binding transcription factor activity, RNA polymerase II-specific"/>
    <property type="evidence" value="ECO:0000318"/>
    <property type="project" value="GO_Central"/>
</dbReference>
<dbReference type="GO" id="GO:0000978">
    <property type="term" value="F:RNA polymerase II cis-regulatory region sequence-specific DNA binding"/>
    <property type="evidence" value="ECO:0000318"/>
    <property type="project" value="GO_Central"/>
</dbReference>
<dbReference type="GO" id="GO:0048568">
    <property type="term" value="P:embryonic organ development"/>
    <property type="evidence" value="ECO:0000318"/>
    <property type="project" value="GO_Central"/>
</dbReference>
<dbReference type="GO" id="GO:0035329">
    <property type="term" value="P:hippo signaling"/>
    <property type="evidence" value="ECO:0000318"/>
    <property type="project" value="GO_Central"/>
</dbReference>
<dbReference type="GO" id="GO:0045944">
    <property type="term" value="P:positive regulation of transcription by RNA polymerase II"/>
    <property type="evidence" value="ECO:0007669"/>
    <property type="project" value="InterPro"/>
</dbReference>
<dbReference type="GO" id="GO:0006357">
    <property type="term" value="P:regulation of transcription by RNA polymerase II"/>
    <property type="evidence" value="ECO:0000318"/>
    <property type="project" value="GO_Central"/>
</dbReference>
<dbReference type="FunFam" id="2.70.50.80:FF:000001">
    <property type="entry name" value="Transcriptional enhancer factor TEF-1, putative"/>
    <property type="match status" value="1"/>
</dbReference>
<dbReference type="Gene3D" id="2.70.50.80">
    <property type="match status" value="1"/>
</dbReference>
<dbReference type="Gene3D" id="6.10.20.40">
    <property type="entry name" value="TEA/ATTS domain"/>
    <property type="match status" value="1"/>
</dbReference>
<dbReference type="InterPro" id="IPR000818">
    <property type="entry name" value="TEA/ATTS_dom"/>
</dbReference>
<dbReference type="InterPro" id="IPR038096">
    <property type="entry name" value="TEA/ATTS_sf"/>
</dbReference>
<dbReference type="InterPro" id="IPR050937">
    <property type="entry name" value="TEC1_TEAD_TF"/>
</dbReference>
<dbReference type="InterPro" id="IPR027253">
    <property type="entry name" value="TEF-5"/>
</dbReference>
<dbReference type="InterPro" id="IPR016361">
    <property type="entry name" value="TEF_metazoa"/>
</dbReference>
<dbReference type="InterPro" id="IPR041086">
    <property type="entry name" value="YBD"/>
</dbReference>
<dbReference type="PANTHER" id="PTHR11834">
    <property type="entry name" value="TRANSCRIPTIONAL ENHANCER FACTOR TEF RELATED"/>
    <property type="match status" value="1"/>
</dbReference>
<dbReference type="PANTHER" id="PTHR11834:SF7">
    <property type="entry name" value="TRANSCRIPTIONAL ENHANCER FACTOR TEF-5"/>
    <property type="match status" value="1"/>
</dbReference>
<dbReference type="Pfam" id="PF01285">
    <property type="entry name" value="TEA"/>
    <property type="match status" value="1"/>
</dbReference>
<dbReference type="Pfam" id="PF17725">
    <property type="entry name" value="YBD"/>
    <property type="match status" value="1"/>
</dbReference>
<dbReference type="PIRSF" id="PIRSF002603">
    <property type="entry name" value="TEF"/>
    <property type="match status" value="1"/>
</dbReference>
<dbReference type="PIRSF" id="PIRSF500720">
    <property type="entry name" value="TEF-5"/>
    <property type="match status" value="1"/>
</dbReference>
<dbReference type="PRINTS" id="PR00065">
    <property type="entry name" value="TEADOMAIN"/>
</dbReference>
<dbReference type="SMART" id="SM00426">
    <property type="entry name" value="TEA"/>
    <property type="match status" value="1"/>
</dbReference>
<dbReference type="PROSITE" id="PS00554">
    <property type="entry name" value="TEA_1"/>
    <property type="match status" value="1"/>
</dbReference>
<dbReference type="PROSITE" id="PS51088">
    <property type="entry name" value="TEA_2"/>
    <property type="match status" value="1"/>
</dbReference>
<accession>Q90701</accession>
<accession>Q90702</accession>
<proteinExistence type="evidence at transcript level"/>
<comment type="function">
    <text evidence="1">Transcription factor which plays a key role in the Hippo signaling pathway, a pathway involved in organ size control and tumor suppression by restricting proliferation and promoting apoptosis. The core of this pathway is composed of a kinase cascade wherein MST1/MST2, in complex with its regulatory protein SAV1, phosphorylates and activates LATS1/2 in complex with its regulatory protein MOB1, which in turn phosphorylates and inactivates YAP1 oncoprotein and WWTR1/TAZ (By similarity).</text>
</comment>
<comment type="subcellular location">
    <subcellularLocation>
        <location evidence="6">Nucleus</location>
    </subcellularLocation>
</comment>
<comment type="alternative products">
    <event type="alternative splicing"/>
    <isoform>
        <id>Q90701-1</id>
        <name>DTEF-1A</name>
        <sequence type="displayed"/>
    </isoform>
    <isoform>
        <id>Q90701-2</id>
        <name>DTEF-1B</name>
        <sequence type="described" ref="VSP_006389"/>
    </isoform>
</comment>
<comment type="tissue specificity">
    <text>High levels in cardiac muscle, low in skeletal muscle. Intermediate levels in gizzard and lung, low levels in kidney.</text>
</comment>
<comment type="sequence caution" evidence="6">
    <conflict type="miscellaneous discrepancy">
        <sequence resource="EMBL-CDS" id="AAC59786"/>
    </conflict>
    <text>Unusual initiator. The initiator methionine is coded by a non-canonical ATA isoleucine codon.</text>
</comment>
<comment type="sequence caution" evidence="6">
    <conflict type="miscellaneous discrepancy">
        <sequence resource="EMBL-CDS" id="AAC59787"/>
    </conflict>
    <text>Unusual initiator. The initiator methionine is coded by a non-canonical ATA isoleucine codon.</text>
</comment>
<reference key="1">
    <citation type="journal article" date="1996" name="J. Biol. Chem.">
        <title>DTEF-1, a novel member of the transcription enhancer factor-1 (TEF-1) multigene family.</title>
        <authorList>
            <person name="Azakie A."/>
            <person name="Larkin S.B."/>
            <person name="Farrance I.K."/>
            <person name="Grenningloh G."/>
            <person name="Ordahl C.P."/>
        </authorList>
    </citation>
    <scope>NUCLEOTIDE SEQUENCE [MRNA] (ISOFORMS DTEF-1A AND DTEF-1B)</scope>
    <source>
        <tissue>Heart</tissue>
    </source>
</reference>
<sequence length="433" mass="48514">MASNSWNASSSPGEGREDGQDGMDKSLDNDAEGVWSPDIEQSFQEALAIYPPCGRRKIILSDEGKMYGRNELIARYIKLRTGKTRTKKQVSSHLQVLARREISGDSSKLKAMNLDQVSKDKAFQSMASMSSAQIVSASVLQNKLSPPPPLPQAVFSAAPRFWSGPIPGQPGPSQDIKPFAQPAYPIQPPMPPSLASYEPLAPLPPAASAVPVWQDRTIASAKLRLLEYSAFMEVPRDAETYSKHLFVHIGQTNPSYSDPLLEAMDIRQIYDKFPEKKGGLKELYERGPQNSFFLLKFWADLNSTIQDGPGTFYGVSSQYSSAENMTITVSTKVCSFGKQVVEKVETEYARLENSRFVYRIHRSPMCEYMINFIHKLKHLPEKYMMNSVLENFTILQVVTNRDTQETLLCIAFVFEVSTSEHGAQHHVYKLVKD</sequence>
<protein>
    <recommendedName>
        <fullName>Transcriptional enhancer factor TEF-5</fullName>
    </recommendedName>
    <alternativeName>
        <fullName>Cardiac-enriched TEA domain transcription factor 1</fullName>
        <shortName>DTEF-1</shortName>
    </alternativeName>
    <alternativeName>
        <fullName>TEA domain family member 3</fullName>
        <shortName>TEAD-3</shortName>
    </alternativeName>
</protein>
<organism>
    <name type="scientific">Gallus gallus</name>
    <name type="common">Chicken</name>
    <dbReference type="NCBI Taxonomy" id="9031"/>
    <lineage>
        <taxon>Eukaryota</taxon>
        <taxon>Metazoa</taxon>
        <taxon>Chordata</taxon>
        <taxon>Craniata</taxon>
        <taxon>Vertebrata</taxon>
        <taxon>Euteleostomi</taxon>
        <taxon>Archelosauria</taxon>
        <taxon>Archosauria</taxon>
        <taxon>Dinosauria</taxon>
        <taxon>Saurischia</taxon>
        <taxon>Theropoda</taxon>
        <taxon>Coelurosauria</taxon>
        <taxon>Aves</taxon>
        <taxon>Neognathae</taxon>
        <taxon>Galloanserae</taxon>
        <taxon>Galliformes</taxon>
        <taxon>Phasianidae</taxon>
        <taxon>Phasianinae</taxon>
        <taxon>Gallus</taxon>
    </lineage>
</organism>
<feature type="chain" id="PRO_0000205936" description="Transcriptional enhancer factor TEF-5">
    <location>
        <begin position="1"/>
        <end position="433"/>
    </location>
</feature>
<feature type="DNA-binding region" description="TEA" evidence="3">
    <location>
        <begin position="28"/>
        <end position="104"/>
    </location>
</feature>
<feature type="region of interest" description="Disordered" evidence="4">
    <location>
        <begin position="1"/>
        <end position="35"/>
    </location>
</feature>
<feature type="region of interest" description="Transcriptional activation" evidence="2">
    <location>
        <begin position="171"/>
        <end position="433"/>
    </location>
</feature>
<feature type="compositionally biased region" description="Polar residues" evidence="4">
    <location>
        <begin position="1"/>
        <end position="12"/>
    </location>
</feature>
<feature type="compositionally biased region" description="Basic and acidic residues" evidence="4">
    <location>
        <begin position="14"/>
        <end position="28"/>
    </location>
</feature>
<feature type="splice variant" id="VSP_006389" description="In isoform DTEF-1B." evidence="5">
    <original>KKQVSSHLQVLARREISGDSSKLK</original>
    <variation>RKQVSSHIQVLARKKVRSTGWHQ</variation>
    <location>
        <begin position="87"/>
        <end position="110"/>
    </location>
</feature>
<gene>
    <name type="primary">TEAD3</name>
    <name type="synonym">DTEF1</name>
    <name type="synonym">TEF5</name>
</gene>
<name>TEAD3_CHICK</name>
<evidence type="ECO:0000250" key="1"/>
<evidence type="ECO:0000255" key="2"/>
<evidence type="ECO:0000255" key="3">
    <source>
        <dbReference type="PROSITE-ProRule" id="PRU00505"/>
    </source>
</evidence>
<evidence type="ECO:0000256" key="4">
    <source>
        <dbReference type="SAM" id="MobiDB-lite"/>
    </source>
</evidence>
<evidence type="ECO:0000303" key="5">
    <source>
    </source>
</evidence>
<evidence type="ECO:0000305" key="6"/>
<keyword id="KW-0010">Activator</keyword>
<keyword id="KW-0025">Alternative splicing</keyword>
<keyword id="KW-0238">DNA-binding</keyword>
<keyword id="KW-0539">Nucleus</keyword>
<keyword id="KW-1185">Reference proteome</keyword>
<keyword id="KW-0804">Transcription</keyword>
<keyword id="KW-0805">Transcription regulation</keyword>